<sequence length="31" mass="3530">MESLVYIFVFVVALGVLFFAIAFREPPRIGK</sequence>
<protein>
    <recommendedName>
        <fullName evidence="1">Photosystem II reaction center protein T</fullName>
        <shortName evidence="1">PSII-T</shortName>
    </recommendedName>
</protein>
<dbReference type="EMBL" id="CP000100">
    <property type="protein sequence ID" value="ABB56728.1"/>
    <property type="molecule type" value="Genomic_DNA"/>
</dbReference>
<dbReference type="RefSeq" id="WP_011243146.1">
    <property type="nucleotide sequence ID" value="NZ_JACJTX010000005.1"/>
</dbReference>
<dbReference type="SMR" id="Q31QE1"/>
<dbReference type="STRING" id="1140.Synpcc7942_0696"/>
<dbReference type="PaxDb" id="1140-Synpcc7942_0696"/>
<dbReference type="KEGG" id="syf:Synpcc7942_0696"/>
<dbReference type="HOGENOM" id="CLU_217078_1_0_3"/>
<dbReference type="BioCyc" id="MetaCyc:SYNPCC7942_0696-MONOMER"/>
<dbReference type="BioCyc" id="SYNEL:SYNPCC7942_0696-MONOMER"/>
<dbReference type="Proteomes" id="UP000889800">
    <property type="component" value="Chromosome"/>
</dbReference>
<dbReference type="GO" id="GO:0009539">
    <property type="term" value="C:photosystem II reaction center"/>
    <property type="evidence" value="ECO:0007669"/>
    <property type="project" value="InterPro"/>
</dbReference>
<dbReference type="GO" id="GO:0031676">
    <property type="term" value="C:plasma membrane-derived thylakoid membrane"/>
    <property type="evidence" value="ECO:0007669"/>
    <property type="project" value="UniProtKB-SubCell"/>
</dbReference>
<dbReference type="GO" id="GO:0015979">
    <property type="term" value="P:photosynthesis"/>
    <property type="evidence" value="ECO:0007669"/>
    <property type="project" value="UniProtKB-UniRule"/>
</dbReference>
<dbReference type="HAMAP" id="MF_00808">
    <property type="entry name" value="PSII_PsbT"/>
    <property type="match status" value="1"/>
</dbReference>
<dbReference type="InterPro" id="IPR001743">
    <property type="entry name" value="PSII_PsbT"/>
</dbReference>
<dbReference type="InterPro" id="IPR037268">
    <property type="entry name" value="PSII_PsbT_sf"/>
</dbReference>
<dbReference type="NCBIfam" id="NF008825">
    <property type="entry name" value="PRK11875.1"/>
    <property type="match status" value="1"/>
</dbReference>
<dbReference type="PANTHER" id="PTHR36411">
    <property type="match status" value="1"/>
</dbReference>
<dbReference type="PANTHER" id="PTHR36411:SF2">
    <property type="entry name" value="PHOTOSYSTEM II REACTION CENTER PROTEIN T"/>
    <property type="match status" value="1"/>
</dbReference>
<dbReference type="Pfam" id="PF01405">
    <property type="entry name" value="PsbT"/>
    <property type="match status" value="1"/>
</dbReference>
<dbReference type="SUPFAM" id="SSF161029">
    <property type="entry name" value="Photosystem II reaction center protein T, PsbT"/>
    <property type="match status" value="1"/>
</dbReference>
<evidence type="ECO:0000255" key="1">
    <source>
        <dbReference type="HAMAP-Rule" id="MF_00808"/>
    </source>
</evidence>
<name>PSBT_SYNE7</name>
<comment type="function">
    <text evidence="1">Found at the monomer-monomer interface of the photosystem II (PS II) dimer, plays a role in assembly and dimerization of PSII. PSII is a light-driven water plastoquinone oxidoreductase, using light energy to abstract electrons from H(2)O, generating a proton gradient subsequently used for ATP formation.</text>
</comment>
<comment type="subunit">
    <text evidence="1">PSII is composed of 1 copy each of membrane proteins PsbA, PsbB, PsbC, PsbD, PsbE, PsbF, PsbH, PsbI, PsbJ, PsbK, PsbL, PsbM, PsbT, PsbX, PsbY, PsbZ, Psb30/Ycf12, peripheral proteins PsbO, CyanoQ (PsbQ), PsbU, PsbV and a large number of cofactors. It forms dimeric complexes.</text>
</comment>
<comment type="subcellular location">
    <subcellularLocation>
        <location evidence="1">Cellular thylakoid membrane</location>
        <topology evidence="1">Single-pass membrane protein</topology>
    </subcellularLocation>
</comment>
<comment type="similarity">
    <text evidence="1">Belongs to the PsbT family.</text>
</comment>
<keyword id="KW-0472">Membrane</keyword>
<keyword id="KW-0602">Photosynthesis</keyword>
<keyword id="KW-0604">Photosystem II</keyword>
<keyword id="KW-1185">Reference proteome</keyword>
<keyword id="KW-0793">Thylakoid</keyword>
<keyword id="KW-0812">Transmembrane</keyword>
<keyword id="KW-1133">Transmembrane helix</keyword>
<reference key="1">
    <citation type="submission" date="2005-08" db="EMBL/GenBank/DDBJ databases">
        <title>Complete sequence of chromosome 1 of Synechococcus elongatus PCC 7942.</title>
        <authorList>
            <consortium name="US DOE Joint Genome Institute"/>
            <person name="Copeland A."/>
            <person name="Lucas S."/>
            <person name="Lapidus A."/>
            <person name="Barry K."/>
            <person name="Detter J.C."/>
            <person name="Glavina T."/>
            <person name="Hammon N."/>
            <person name="Israni S."/>
            <person name="Pitluck S."/>
            <person name="Schmutz J."/>
            <person name="Larimer F."/>
            <person name="Land M."/>
            <person name="Kyrpides N."/>
            <person name="Lykidis A."/>
            <person name="Golden S."/>
            <person name="Richardson P."/>
        </authorList>
    </citation>
    <scope>NUCLEOTIDE SEQUENCE [LARGE SCALE GENOMIC DNA]</scope>
    <source>
        <strain>ATCC 33912 / PCC 7942 / FACHB-805</strain>
    </source>
</reference>
<organism>
    <name type="scientific">Synechococcus elongatus (strain ATCC 33912 / PCC 7942 / FACHB-805)</name>
    <name type="common">Anacystis nidulans R2</name>
    <dbReference type="NCBI Taxonomy" id="1140"/>
    <lineage>
        <taxon>Bacteria</taxon>
        <taxon>Bacillati</taxon>
        <taxon>Cyanobacteriota</taxon>
        <taxon>Cyanophyceae</taxon>
        <taxon>Synechococcales</taxon>
        <taxon>Synechococcaceae</taxon>
        <taxon>Synechococcus</taxon>
    </lineage>
</organism>
<gene>
    <name evidence="1" type="primary">psbT</name>
    <name type="ordered locus">Synpcc7942_0696</name>
</gene>
<feature type="chain" id="PRO_1000047101" description="Photosystem II reaction center protein T">
    <location>
        <begin position="1"/>
        <end position="31"/>
    </location>
</feature>
<feature type="transmembrane region" description="Helical" evidence="1">
    <location>
        <begin position="3"/>
        <end position="23"/>
    </location>
</feature>
<proteinExistence type="inferred from homology"/>
<accession>Q31QE1</accession>